<proteinExistence type="evidence at transcript level"/>
<protein>
    <recommendedName>
        <fullName evidence="1">NAD-dependent protein deacylase Sirt4</fullName>
        <ecNumber evidence="1 2">2.3.1.286</ecNumber>
    </recommendedName>
    <alternativeName>
        <fullName evidence="1">Regulatory protein SIR2 homolog 4</fullName>
    </alternativeName>
</protein>
<evidence type="ECO:0000255" key="1">
    <source>
        <dbReference type="HAMAP-Rule" id="MF_03161"/>
    </source>
</evidence>
<evidence type="ECO:0000255" key="2">
    <source>
        <dbReference type="PROSITE-ProRule" id="PRU00236"/>
    </source>
</evidence>
<evidence type="ECO:0000305" key="3"/>
<keyword id="KW-0025">Alternative splicing</keyword>
<keyword id="KW-0479">Metal-binding</keyword>
<keyword id="KW-0496">Mitochondrion</keyword>
<keyword id="KW-0520">NAD</keyword>
<keyword id="KW-1185">Reference proteome</keyword>
<keyword id="KW-0808">Transferase</keyword>
<keyword id="KW-0809">Transit peptide</keyword>
<keyword id="KW-0862">Zinc</keyword>
<organism>
    <name type="scientific">Drosophila melanogaster</name>
    <name type="common">Fruit fly</name>
    <dbReference type="NCBI Taxonomy" id="7227"/>
    <lineage>
        <taxon>Eukaryota</taxon>
        <taxon>Metazoa</taxon>
        <taxon>Ecdysozoa</taxon>
        <taxon>Arthropoda</taxon>
        <taxon>Hexapoda</taxon>
        <taxon>Insecta</taxon>
        <taxon>Pterygota</taxon>
        <taxon>Neoptera</taxon>
        <taxon>Endopterygota</taxon>
        <taxon>Diptera</taxon>
        <taxon>Brachycera</taxon>
        <taxon>Muscomorpha</taxon>
        <taxon>Ephydroidea</taxon>
        <taxon>Drosophilidae</taxon>
        <taxon>Drosophila</taxon>
        <taxon>Sophophora</taxon>
    </lineage>
</organism>
<dbReference type="EC" id="2.3.1.286" evidence="1 2"/>
<dbReference type="EMBL" id="AE014298">
    <property type="protein sequence ID" value="AAF46055.3"/>
    <property type="molecule type" value="Genomic_DNA"/>
</dbReference>
<dbReference type="EMBL" id="AE014298">
    <property type="protein sequence ID" value="AAN09147.2"/>
    <property type="molecule type" value="Genomic_DNA"/>
</dbReference>
<dbReference type="EMBL" id="AE014298">
    <property type="protein sequence ID" value="AAN09146.2"/>
    <property type="molecule type" value="Genomic_DNA"/>
</dbReference>
<dbReference type="EMBL" id="BT011040">
    <property type="protein sequence ID" value="AAR30200.1"/>
    <property type="molecule type" value="mRNA"/>
</dbReference>
<dbReference type="EMBL" id="BT099555">
    <property type="protein sequence ID" value="ACU32639.1"/>
    <property type="molecule type" value="mRNA"/>
</dbReference>
<dbReference type="EMBL" id="BT100157">
    <property type="protein sequence ID" value="ACY07062.1"/>
    <property type="molecule type" value="mRNA"/>
</dbReference>
<dbReference type="RefSeq" id="NP_572241.2">
    <molecule id="Q8IRR5-1"/>
    <property type="nucleotide sequence ID" value="NM_132013.3"/>
</dbReference>
<dbReference type="RefSeq" id="NP_727013.2">
    <molecule id="Q8IRR5-2"/>
    <property type="nucleotide sequence ID" value="NM_167041.3"/>
</dbReference>
<dbReference type="RefSeq" id="NP_727014.2">
    <molecule id="Q8IRR5-2"/>
    <property type="nucleotide sequence ID" value="NM_167042.3"/>
</dbReference>
<dbReference type="SMR" id="Q8IRR5"/>
<dbReference type="BioGRID" id="57986">
    <property type="interactions" value="29"/>
</dbReference>
<dbReference type="FunCoup" id="Q8IRR5">
    <property type="interactions" value="1401"/>
</dbReference>
<dbReference type="IntAct" id="Q8IRR5">
    <property type="interactions" value="3"/>
</dbReference>
<dbReference type="STRING" id="7227.FBpp0070817"/>
<dbReference type="PaxDb" id="7227-FBpp0070817"/>
<dbReference type="DNASU" id="31480"/>
<dbReference type="EnsemblMetazoa" id="FBtr0070850">
    <molecule id="Q8IRR5-2"/>
    <property type="protein sequence ID" value="FBpp0070815"/>
    <property type="gene ID" value="FBgn0029783"/>
</dbReference>
<dbReference type="EnsemblMetazoa" id="FBtr0070851">
    <molecule id="Q8IRR5-2"/>
    <property type="protein sequence ID" value="FBpp0070816"/>
    <property type="gene ID" value="FBgn0029783"/>
</dbReference>
<dbReference type="EnsemblMetazoa" id="FBtr0070852">
    <molecule id="Q8IRR5-1"/>
    <property type="protein sequence ID" value="FBpp0070817"/>
    <property type="gene ID" value="FBgn0029783"/>
</dbReference>
<dbReference type="GeneID" id="31480"/>
<dbReference type="KEGG" id="dme:Dmel_CG3187"/>
<dbReference type="UCSC" id="CG3187-RA">
    <property type="organism name" value="d. melanogaster"/>
</dbReference>
<dbReference type="UCSC" id="CG3187-RC">
    <molecule id="Q8IRR5-1"/>
    <property type="organism name" value="d. melanogaster"/>
</dbReference>
<dbReference type="AGR" id="FB:FBgn0029783"/>
<dbReference type="CTD" id="23409"/>
<dbReference type="FlyBase" id="FBgn0029783">
    <property type="gene designation" value="Sirt4"/>
</dbReference>
<dbReference type="VEuPathDB" id="VectorBase:FBgn0029783"/>
<dbReference type="eggNOG" id="KOG2683">
    <property type="taxonomic scope" value="Eukaryota"/>
</dbReference>
<dbReference type="GeneTree" id="ENSGT00940000158891"/>
<dbReference type="HOGENOM" id="CLU_023643_3_2_1"/>
<dbReference type="InParanoid" id="Q8IRR5"/>
<dbReference type="OMA" id="RRHYWAR"/>
<dbReference type="OrthoDB" id="424302at2759"/>
<dbReference type="PhylomeDB" id="Q8IRR5"/>
<dbReference type="Reactome" id="R-DME-204174">
    <property type="pathway name" value="Regulation of pyruvate dehydrogenase (PDH) complex"/>
</dbReference>
<dbReference type="Reactome" id="R-DME-2151201">
    <property type="pathway name" value="Transcriptional activation of mitochondrial biogenesis"/>
</dbReference>
<dbReference type="SignaLink" id="Q8IRR5"/>
<dbReference type="BioGRID-ORCS" id="31480">
    <property type="hits" value="0 hits in 1 CRISPR screen"/>
</dbReference>
<dbReference type="ChiTaRS" id="Sirt4">
    <property type="organism name" value="fly"/>
</dbReference>
<dbReference type="GenomeRNAi" id="31480"/>
<dbReference type="PRO" id="PR:Q8IRR5"/>
<dbReference type="Proteomes" id="UP000000803">
    <property type="component" value="Chromosome X"/>
</dbReference>
<dbReference type="Bgee" id="FBgn0029783">
    <property type="expression patterns" value="Expressed in adult hindgut (Drosophila) and 42 other cell types or tissues"/>
</dbReference>
<dbReference type="GO" id="GO:0005759">
    <property type="term" value="C:mitochondrial matrix"/>
    <property type="evidence" value="ECO:0000250"/>
    <property type="project" value="FlyBase"/>
</dbReference>
<dbReference type="GO" id="GO:0005739">
    <property type="term" value="C:mitochondrion"/>
    <property type="evidence" value="ECO:0000314"/>
    <property type="project" value="FlyBase"/>
</dbReference>
<dbReference type="GO" id="GO:0004407">
    <property type="term" value="F:histone deacetylase activity"/>
    <property type="evidence" value="ECO:0000315"/>
    <property type="project" value="FlyBase"/>
</dbReference>
<dbReference type="GO" id="GO:0017136">
    <property type="term" value="F:histone deacetylase activity, NAD-dependent"/>
    <property type="evidence" value="ECO:0000318"/>
    <property type="project" value="GO_Central"/>
</dbReference>
<dbReference type="GO" id="GO:0070403">
    <property type="term" value="F:NAD+ binding"/>
    <property type="evidence" value="ECO:0000318"/>
    <property type="project" value="GO_Central"/>
</dbReference>
<dbReference type="GO" id="GO:0003950">
    <property type="term" value="F:NAD+ poly-ADP-ribosyltransferase activity"/>
    <property type="evidence" value="ECO:0000250"/>
    <property type="project" value="FlyBase"/>
</dbReference>
<dbReference type="GO" id="GO:0034979">
    <property type="term" value="F:NAD-dependent protein lysine deacetylase activity"/>
    <property type="evidence" value="ECO:0000250"/>
    <property type="project" value="FlyBase"/>
</dbReference>
<dbReference type="GO" id="GO:0008270">
    <property type="term" value="F:zinc ion binding"/>
    <property type="evidence" value="ECO:0007669"/>
    <property type="project" value="UniProtKB-UniRule"/>
</dbReference>
<dbReference type="GO" id="GO:0009267">
    <property type="term" value="P:cellular response to starvation"/>
    <property type="evidence" value="ECO:0000315"/>
    <property type="project" value="FlyBase"/>
</dbReference>
<dbReference type="GO" id="GO:0008340">
    <property type="term" value="P:determination of adult lifespan"/>
    <property type="evidence" value="ECO:0000315"/>
    <property type="project" value="FlyBase"/>
</dbReference>
<dbReference type="CDD" id="cd01409">
    <property type="entry name" value="SIRT4"/>
    <property type="match status" value="1"/>
</dbReference>
<dbReference type="Gene3D" id="3.30.1600.10">
    <property type="entry name" value="SIR2/SIRT2 'Small Domain"/>
    <property type="match status" value="1"/>
</dbReference>
<dbReference type="Gene3D" id="3.40.50.1220">
    <property type="entry name" value="TPP-binding domain"/>
    <property type="match status" value="1"/>
</dbReference>
<dbReference type="HAMAP" id="MF_01967">
    <property type="entry name" value="Sirtuin_ClassII"/>
    <property type="match status" value="1"/>
</dbReference>
<dbReference type="InterPro" id="IPR029035">
    <property type="entry name" value="DHS-like_NAD/FAD-binding_dom"/>
</dbReference>
<dbReference type="InterPro" id="IPR050134">
    <property type="entry name" value="NAD-dep_sirtuin_deacylases"/>
</dbReference>
<dbReference type="InterPro" id="IPR003000">
    <property type="entry name" value="Sirtuin"/>
</dbReference>
<dbReference type="InterPro" id="IPR026591">
    <property type="entry name" value="Sirtuin_cat_small_dom_sf"/>
</dbReference>
<dbReference type="InterPro" id="IPR026587">
    <property type="entry name" value="Sirtuin_class_II"/>
</dbReference>
<dbReference type="InterPro" id="IPR026590">
    <property type="entry name" value="Ssirtuin_cat_dom"/>
</dbReference>
<dbReference type="NCBIfam" id="NF003738">
    <property type="entry name" value="PRK05333.1"/>
    <property type="match status" value="1"/>
</dbReference>
<dbReference type="PANTHER" id="PTHR11085">
    <property type="entry name" value="NAD-DEPENDENT PROTEIN DEACYLASE SIRTUIN-5, MITOCHONDRIAL-RELATED"/>
    <property type="match status" value="1"/>
</dbReference>
<dbReference type="PANTHER" id="PTHR11085:SF10">
    <property type="entry name" value="NAD-DEPENDENT PROTEIN DEACYLASE SIRTUIN-5, MITOCHONDRIAL-RELATED"/>
    <property type="match status" value="1"/>
</dbReference>
<dbReference type="Pfam" id="PF02146">
    <property type="entry name" value="SIR2"/>
    <property type="match status" value="1"/>
</dbReference>
<dbReference type="SUPFAM" id="SSF52467">
    <property type="entry name" value="DHS-like NAD/FAD-binding domain"/>
    <property type="match status" value="1"/>
</dbReference>
<dbReference type="PROSITE" id="PS50305">
    <property type="entry name" value="SIRTUIN"/>
    <property type="match status" value="1"/>
</dbReference>
<name>SIR4_DROME</name>
<sequence length="312" mass="34991">MRVGQLLRFRSTSLRSSTARQEYVPHHKPVVEDDIKRLEDFLLSKPNVLVLTGAGISTESGIPDYRSEGVGLYARSNHKPVQHMEFVKSSAVRKRYWARNFVGWPKFSATQPNATHHALARFEREERVQAVVTQNVDRLHTKAGSRNVVEVHGSGYVVKCLSCEYRIDRHEFQSILASLNPAFKDAPDMIRPDGDVEIPLEYIENFRIPECTQCGGDLKPEIVFFGDSVPRPRVDQIAGMVYNSDGLLVLGSSLLVFSGYRVVLQTKDLKLPVGIVNIGETRADHLADIKISAKCGDVIPKLFDFRNSKSVS</sequence>
<gene>
    <name type="primary">Sirt4</name>
    <name type="ORF">CG3187</name>
</gene>
<comment type="function">
    <text evidence="1">NAD-dependent protein deacylase. Catalyzes the NAD-dependent hydrolysis of acyl groups from lysine residues.</text>
</comment>
<comment type="catalytic activity">
    <reaction evidence="1">
        <text>N(6)-acetyl-L-lysyl-[protein] + NAD(+) + H2O = 2''-O-acetyl-ADP-D-ribose + nicotinamide + L-lysyl-[protein]</text>
        <dbReference type="Rhea" id="RHEA:43636"/>
        <dbReference type="Rhea" id="RHEA-COMP:9752"/>
        <dbReference type="Rhea" id="RHEA-COMP:10731"/>
        <dbReference type="ChEBI" id="CHEBI:15377"/>
        <dbReference type="ChEBI" id="CHEBI:17154"/>
        <dbReference type="ChEBI" id="CHEBI:29969"/>
        <dbReference type="ChEBI" id="CHEBI:57540"/>
        <dbReference type="ChEBI" id="CHEBI:61930"/>
        <dbReference type="ChEBI" id="CHEBI:83767"/>
        <dbReference type="EC" id="2.3.1.286"/>
    </reaction>
</comment>
<comment type="cofactor">
    <cofactor evidence="1">
        <name>Zn(2+)</name>
        <dbReference type="ChEBI" id="CHEBI:29105"/>
    </cofactor>
    <text evidence="1">Binds 1 zinc ion per subunit.</text>
</comment>
<comment type="subcellular location">
    <subcellularLocation>
        <location evidence="1">Mitochondrion matrix</location>
    </subcellularLocation>
</comment>
<comment type="alternative products">
    <event type="alternative splicing"/>
    <isoform>
        <id>Q8IRR5-1</id>
        <name>c</name>
        <sequence type="displayed"/>
    </isoform>
    <isoform>
        <id>Q8IRR5-2</id>
        <name>a</name>
        <name>b</name>
        <sequence type="described" ref="VSP_043535"/>
    </isoform>
</comment>
<comment type="similarity">
    <text evidence="1">Belongs to the sirtuin family. Class II subfamily.</text>
</comment>
<feature type="transit peptide" description="Mitochondrion" evidence="1">
    <location>
        <begin position="1"/>
        <end position="16"/>
    </location>
</feature>
<feature type="chain" id="PRO_0000417347" description="NAD-dependent protein deacylase Sirt4">
    <location>
        <begin position="17"/>
        <end position="312"/>
    </location>
</feature>
<feature type="domain" description="Deacetylase sirtuin-type" evidence="2">
    <location>
        <begin position="28"/>
        <end position="312"/>
    </location>
</feature>
<feature type="active site" description="Proton acceptor" evidence="2">
    <location>
        <position position="152"/>
    </location>
</feature>
<feature type="binding site" evidence="1">
    <location>
        <begin position="53"/>
        <end position="73"/>
    </location>
    <ligand>
        <name>NAD(+)</name>
        <dbReference type="ChEBI" id="CHEBI:57540"/>
    </ligand>
</feature>
<feature type="binding site" evidence="1">
    <location>
        <begin position="134"/>
        <end position="137"/>
    </location>
    <ligand>
        <name>NAD(+)</name>
        <dbReference type="ChEBI" id="CHEBI:57540"/>
    </ligand>
</feature>
<feature type="binding site" evidence="1">
    <location>
        <position position="160"/>
    </location>
    <ligand>
        <name>Zn(2+)</name>
        <dbReference type="ChEBI" id="CHEBI:29105"/>
    </ligand>
</feature>
<feature type="binding site" evidence="1">
    <location>
        <position position="163"/>
    </location>
    <ligand>
        <name>Zn(2+)</name>
        <dbReference type="ChEBI" id="CHEBI:29105"/>
    </ligand>
</feature>
<feature type="binding site" evidence="1">
    <location>
        <position position="211"/>
    </location>
    <ligand>
        <name>Zn(2+)</name>
        <dbReference type="ChEBI" id="CHEBI:29105"/>
    </ligand>
</feature>
<feature type="binding site" evidence="1">
    <location>
        <position position="214"/>
    </location>
    <ligand>
        <name>Zn(2+)</name>
        <dbReference type="ChEBI" id="CHEBI:29105"/>
    </ligand>
</feature>
<feature type="binding site" evidence="1">
    <location>
        <begin position="251"/>
        <end position="253"/>
    </location>
    <ligand>
        <name>NAD(+)</name>
        <dbReference type="ChEBI" id="CHEBI:57540"/>
    </ligand>
</feature>
<feature type="binding site" evidence="1">
    <location>
        <begin position="277"/>
        <end position="279"/>
    </location>
    <ligand>
        <name>NAD(+)</name>
        <dbReference type="ChEBI" id="CHEBI:57540"/>
    </ligand>
</feature>
<feature type="binding site" evidence="1">
    <location>
        <position position="295"/>
    </location>
    <ligand>
        <name>NAD(+)</name>
        <dbReference type="ChEBI" id="CHEBI:57540"/>
    </ligand>
</feature>
<feature type="splice variant" id="VSP_043535" description="In isoform a." evidence="3">
    <location>
        <begin position="1"/>
        <end position="83"/>
    </location>
</feature>
<feature type="sequence conflict" description="In Ref. 4; ACY07062." evidence="3" ref="4">
    <original>G</original>
    <variation>A</variation>
    <location>
        <position position="274"/>
    </location>
</feature>
<accession>Q8IRR5</accession>
<accession>D0IQB9</accession>
<accession>Q9W4A1</accession>
<reference key="1">
    <citation type="journal article" date="2000" name="Science">
        <title>The genome sequence of Drosophila melanogaster.</title>
        <authorList>
            <person name="Adams M.D."/>
            <person name="Celniker S.E."/>
            <person name="Holt R.A."/>
            <person name="Evans C.A."/>
            <person name="Gocayne J.D."/>
            <person name="Amanatides P.G."/>
            <person name="Scherer S.E."/>
            <person name="Li P.W."/>
            <person name="Hoskins R.A."/>
            <person name="Galle R.F."/>
            <person name="George R.A."/>
            <person name="Lewis S.E."/>
            <person name="Richards S."/>
            <person name="Ashburner M."/>
            <person name="Henderson S.N."/>
            <person name="Sutton G.G."/>
            <person name="Wortman J.R."/>
            <person name="Yandell M.D."/>
            <person name="Zhang Q."/>
            <person name="Chen L.X."/>
            <person name="Brandon R.C."/>
            <person name="Rogers Y.-H.C."/>
            <person name="Blazej R.G."/>
            <person name="Champe M."/>
            <person name="Pfeiffer B.D."/>
            <person name="Wan K.H."/>
            <person name="Doyle C."/>
            <person name="Baxter E.G."/>
            <person name="Helt G."/>
            <person name="Nelson C.R."/>
            <person name="Miklos G.L.G."/>
            <person name="Abril J.F."/>
            <person name="Agbayani A."/>
            <person name="An H.-J."/>
            <person name="Andrews-Pfannkoch C."/>
            <person name="Baldwin D."/>
            <person name="Ballew R.M."/>
            <person name="Basu A."/>
            <person name="Baxendale J."/>
            <person name="Bayraktaroglu L."/>
            <person name="Beasley E.M."/>
            <person name="Beeson K.Y."/>
            <person name="Benos P.V."/>
            <person name="Berman B.P."/>
            <person name="Bhandari D."/>
            <person name="Bolshakov S."/>
            <person name="Borkova D."/>
            <person name="Botchan M.R."/>
            <person name="Bouck J."/>
            <person name="Brokstein P."/>
            <person name="Brottier P."/>
            <person name="Burtis K.C."/>
            <person name="Busam D.A."/>
            <person name="Butler H."/>
            <person name="Cadieu E."/>
            <person name="Center A."/>
            <person name="Chandra I."/>
            <person name="Cherry J.M."/>
            <person name="Cawley S."/>
            <person name="Dahlke C."/>
            <person name="Davenport L.B."/>
            <person name="Davies P."/>
            <person name="de Pablos B."/>
            <person name="Delcher A."/>
            <person name="Deng Z."/>
            <person name="Mays A.D."/>
            <person name="Dew I."/>
            <person name="Dietz S.M."/>
            <person name="Dodson K."/>
            <person name="Doup L.E."/>
            <person name="Downes M."/>
            <person name="Dugan-Rocha S."/>
            <person name="Dunkov B.C."/>
            <person name="Dunn P."/>
            <person name="Durbin K.J."/>
            <person name="Evangelista C.C."/>
            <person name="Ferraz C."/>
            <person name="Ferriera S."/>
            <person name="Fleischmann W."/>
            <person name="Fosler C."/>
            <person name="Gabrielian A.E."/>
            <person name="Garg N.S."/>
            <person name="Gelbart W.M."/>
            <person name="Glasser K."/>
            <person name="Glodek A."/>
            <person name="Gong F."/>
            <person name="Gorrell J.H."/>
            <person name="Gu Z."/>
            <person name="Guan P."/>
            <person name="Harris M."/>
            <person name="Harris N.L."/>
            <person name="Harvey D.A."/>
            <person name="Heiman T.J."/>
            <person name="Hernandez J.R."/>
            <person name="Houck J."/>
            <person name="Hostin D."/>
            <person name="Houston K.A."/>
            <person name="Howland T.J."/>
            <person name="Wei M.-H."/>
            <person name="Ibegwam C."/>
            <person name="Jalali M."/>
            <person name="Kalush F."/>
            <person name="Karpen G.H."/>
            <person name="Ke Z."/>
            <person name="Kennison J.A."/>
            <person name="Ketchum K.A."/>
            <person name="Kimmel B.E."/>
            <person name="Kodira C.D."/>
            <person name="Kraft C.L."/>
            <person name="Kravitz S."/>
            <person name="Kulp D."/>
            <person name="Lai Z."/>
            <person name="Lasko P."/>
            <person name="Lei Y."/>
            <person name="Levitsky A.A."/>
            <person name="Li J.H."/>
            <person name="Li Z."/>
            <person name="Liang Y."/>
            <person name="Lin X."/>
            <person name="Liu X."/>
            <person name="Mattei B."/>
            <person name="McIntosh T.C."/>
            <person name="McLeod M.P."/>
            <person name="McPherson D."/>
            <person name="Merkulov G."/>
            <person name="Milshina N.V."/>
            <person name="Mobarry C."/>
            <person name="Morris J."/>
            <person name="Moshrefi A."/>
            <person name="Mount S.M."/>
            <person name="Moy M."/>
            <person name="Murphy B."/>
            <person name="Murphy L."/>
            <person name="Muzny D.M."/>
            <person name="Nelson D.L."/>
            <person name="Nelson D.R."/>
            <person name="Nelson K.A."/>
            <person name="Nixon K."/>
            <person name="Nusskern D.R."/>
            <person name="Pacleb J.M."/>
            <person name="Palazzolo M."/>
            <person name="Pittman G.S."/>
            <person name="Pan S."/>
            <person name="Pollard J."/>
            <person name="Puri V."/>
            <person name="Reese M.G."/>
            <person name="Reinert K."/>
            <person name="Remington K."/>
            <person name="Saunders R.D.C."/>
            <person name="Scheeler F."/>
            <person name="Shen H."/>
            <person name="Shue B.C."/>
            <person name="Siden-Kiamos I."/>
            <person name="Simpson M."/>
            <person name="Skupski M.P."/>
            <person name="Smith T.J."/>
            <person name="Spier E."/>
            <person name="Spradling A.C."/>
            <person name="Stapleton M."/>
            <person name="Strong R."/>
            <person name="Sun E."/>
            <person name="Svirskas R."/>
            <person name="Tector C."/>
            <person name="Turner R."/>
            <person name="Venter E."/>
            <person name="Wang A.H."/>
            <person name="Wang X."/>
            <person name="Wang Z.-Y."/>
            <person name="Wassarman D.A."/>
            <person name="Weinstock G.M."/>
            <person name="Weissenbach J."/>
            <person name="Williams S.M."/>
            <person name="Woodage T."/>
            <person name="Worley K.C."/>
            <person name="Wu D."/>
            <person name="Yang S."/>
            <person name="Yao Q.A."/>
            <person name="Ye J."/>
            <person name="Yeh R.-F."/>
            <person name="Zaveri J.S."/>
            <person name="Zhan M."/>
            <person name="Zhang G."/>
            <person name="Zhao Q."/>
            <person name="Zheng L."/>
            <person name="Zheng X.H."/>
            <person name="Zhong F.N."/>
            <person name="Zhong W."/>
            <person name="Zhou X."/>
            <person name="Zhu S.C."/>
            <person name="Zhu X."/>
            <person name="Smith H.O."/>
            <person name="Gibbs R.A."/>
            <person name="Myers E.W."/>
            <person name="Rubin G.M."/>
            <person name="Venter J.C."/>
        </authorList>
    </citation>
    <scope>NUCLEOTIDE SEQUENCE [LARGE SCALE GENOMIC DNA]</scope>
    <source>
        <strain>Berkeley</strain>
    </source>
</reference>
<reference key="2">
    <citation type="journal article" date="2002" name="Genome Biol.">
        <title>Annotation of the Drosophila melanogaster euchromatic genome: a systematic review.</title>
        <authorList>
            <person name="Misra S."/>
            <person name="Crosby M.A."/>
            <person name="Mungall C.J."/>
            <person name="Matthews B.B."/>
            <person name="Campbell K.S."/>
            <person name="Hradecky P."/>
            <person name="Huang Y."/>
            <person name="Kaminker J.S."/>
            <person name="Millburn G.H."/>
            <person name="Prochnik S.E."/>
            <person name="Smith C.D."/>
            <person name="Tupy J.L."/>
            <person name="Whitfield E.J."/>
            <person name="Bayraktaroglu L."/>
            <person name="Berman B.P."/>
            <person name="Bettencourt B.R."/>
            <person name="Celniker S.E."/>
            <person name="de Grey A.D.N.J."/>
            <person name="Drysdale R.A."/>
            <person name="Harris N.L."/>
            <person name="Richter J."/>
            <person name="Russo S."/>
            <person name="Schroeder A.J."/>
            <person name="Shu S.Q."/>
            <person name="Stapleton M."/>
            <person name="Yamada C."/>
            <person name="Ashburner M."/>
            <person name="Gelbart W.M."/>
            <person name="Rubin G.M."/>
            <person name="Lewis S.E."/>
        </authorList>
    </citation>
    <scope>GENOME REANNOTATION</scope>
    <source>
        <strain>Berkeley</strain>
    </source>
</reference>
<reference key="3">
    <citation type="submission" date="2003-12" db="EMBL/GenBank/DDBJ databases">
        <authorList>
            <person name="Stapleton M."/>
            <person name="Brokstein P."/>
            <person name="Hong L."/>
            <person name="Agbayani A."/>
            <person name="Carlson J."/>
            <person name="Champe M."/>
            <person name="Chavez C."/>
            <person name="Dorsett V."/>
            <person name="Dresnek D."/>
            <person name="Farfan D."/>
            <person name="Frise E."/>
            <person name="George R."/>
            <person name="Gonzalez M."/>
            <person name="Guarin H."/>
            <person name="Kronmiller B."/>
            <person name="Li P."/>
            <person name="Liao G."/>
            <person name="Miranda A."/>
            <person name="Mungall C.J."/>
            <person name="Nunoo J."/>
            <person name="Pacleb J."/>
            <person name="Paragas V."/>
            <person name="Park S."/>
            <person name="Patel S."/>
            <person name="Phouanenavong S."/>
            <person name="Wan K."/>
            <person name="Yu C."/>
            <person name="Lewis S.E."/>
            <person name="Rubin G.M."/>
            <person name="Celniker S.E."/>
        </authorList>
    </citation>
    <scope>NUCLEOTIDE SEQUENCE [LARGE SCALE MRNA]</scope>
    <source>
        <strain>Berkeley</strain>
    </source>
</reference>
<reference key="4">
    <citation type="submission" date="2009-10" db="EMBL/GenBank/DDBJ databases">
        <authorList>
            <person name="Carlson J."/>
            <person name="Booth B."/>
            <person name="Frise E."/>
            <person name="Park S."/>
            <person name="Wan K."/>
            <person name="Yu C."/>
            <person name="Celniker S.E."/>
        </authorList>
    </citation>
    <scope>NUCLEOTIDE SEQUENCE [LARGE SCALE MRNA]</scope>
    <source>
        <strain>Berkeley</strain>
    </source>
</reference>